<proteinExistence type="inferred from homology"/>
<dbReference type="EC" id="4.1.1.39" evidence="1"/>
<dbReference type="EMBL" id="L01922">
    <property type="protein sequence ID" value="AAA84315.2"/>
    <property type="molecule type" value="Genomic_DNA"/>
</dbReference>
<dbReference type="GO" id="GO:0009507">
    <property type="term" value="C:chloroplast"/>
    <property type="evidence" value="ECO:0007669"/>
    <property type="project" value="UniProtKB-SubCell"/>
</dbReference>
<dbReference type="GO" id="GO:0000287">
    <property type="term" value="F:magnesium ion binding"/>
    <property type="evidence" value="ECO:0007669"/>
    <property type="project" value="InterPro"/>
</dbReference>
<dbReference type="GO" id="GO:0004497">
    <property type="term" value="F:monooxygenase activity"/>
    <property type="evidence" value="ECO:0007669"/>
    <property type="project" value="UniProtKB-KW"/>
</dbReference>
<dbReference type="GO" id="GO:0016984">
    <property type="term" value="F:ribulose-bisphosphate carboxylase activity"/>
    <property type="evidence" value="ECO:0007669"/>
    <property type="project" value="UniProtKB-EC"/>
</dbReference>
<dbReference type="GO" id="GO:0009853">
    <property type="term" value="P:photorespiration"/>
    <property type="evidence" value="ECO:0007669"/>
    <property type="project" value="UniProtKB-KW"/>
</dbReference>
<dbReference type="GO" id="GO:0019253">
    <property type="term" value="P:reductive pentose-phosphate cycle"/>
    <property type="evidence" value="ECO:0007669"/>
    <property type="project" value="UniProtKB-KW"/>
</dbReference>
<dbReference type="CDD" id="cd08212">
    <property type="entry name" value="RuBisCO_large_I"/>
    <property type="match status" value="1"/>
</dbReference>
<dbReference type="FunFam" id="3.20.20.110:FF:000001">
    <property type="entry name" value="Ribulose bisphosphate carboxylase large chain"/>
    <property type="match status" value="1"/>
</dbReference>
<dbReference type="FunFam" id="3.30.70.150:FF:000001">
    <property type="entry name" value="Ribulose bisphosphate carboxylase large chain"/>
    <property type="match status" value="1"/>
</dbReference>
<dbReference type="Gene3D" id="3.20.20.110">
    <property type="entry name" value="Ribulose bisphosphate carboxylase, large subunit, C-terminal domain"/>
    <property type="match status" value="1"/>
</dbReference>
<dbReference type="Gene3D" id="3.30.70.150">
    <property type="entry name" value="RuBisCO large subunit, N-terminal domain"/>
    <property type="match status" value="1"/>
</dbReference>
<dbReference type="HAMAP" id="MF_01338">
    <property type="entry name" value="RuBisCO_L_type1"/>
    <property type="match status" value="1"/>
</dbReference>
<dbReference type="InterPro" id="IPR033966">
    <property type="entry name" value="RuBisCO"/>
</dbReference>
<dbReference type="InterPro" id="IPR020878">
    <property type="entry name" value="RuBisCo_large_chain_AS"/>
</dbReference>
<dbReference type="InterPro" id="IPR000685">
    <property type="entry name" value="RuBisCO_lsu_C"/>
</dbReference>
<dbReference type="InterPro" id="IPR036376">
    <property type="entry name" value="RuBisCO_lsu_C_sf"/>
</dbReference>
<dbReference type="InterPro" id="IPR017443">
    <property type="entry name" value="RuBisCO_lsu_fd_N"/>
</dbReference>
<dbReference type="InterPro" id="IPR036422">
    <property type="entry name" value="RuBisCO_lsu_N_sf"/>
</dbReference>
<dbReference type="InterPro" id="IPR020888">
    <property type="entry name" value="RuBisCO_lsuI"/>
</dbReference>
<dbReference type="NCBIfam" id="NF003252">
    <property type="entry name" value="PRK04208.1"/>
    <property type="match status" value="1"/>
</dbReference>
<dbReference type="PANTHER" id="PTHR42704">
    <property type="entry name" value="RIBULOSE BISPHOSPHATE CARBOXYLASE"/>
    <property type="match status" value="1"/>
</dbReference>
<dbReference type="PANTHER" id="PTHR42704:SF16">
    <property type="entry name" value="RIBULOSE BISPHOSPHATE CARBOXYLASE LARGE CHAIN"/>
    <property type="match status" value="1"/>
</dbReference>
<dbReference type="Pfam" id="PF00016">
    <property type="entry name" value="RuBisCO_large"/>
    <property type="match status" value="1"/>
</dbReference>
<dbReference type="Pfam" id="PF02788">
    <property type="entry name" value="RuBisCO_large_N"/>
    <property type="match status" value="1"/>
</dbReference>
<dbReference type="SFLD" id="SFLDG01052">
    <property type="entry name" value="RuBisCO"/>
    <property type="match status" value="1"/>
</dbReference>
<dbReference type="SFLD" id="SFLDS00014">
    <property type="entry name" value="RuBisCO"/>
    <property type="match status" value="1"/>
</dbReference>
<dbReference type="SFLD" id="SFLDG00301">
    <property type="entry name" value="RuBisCO-like_proteins"/>
    <property type="match status" value="1"/>
</dbReference>
<dbReference type="SUPFAM" id="SSF51649">
    <property type="entry name" value="RuBisCo, C-terminal domain"/>
    <property type="match status" value="1"/>
</dbReference>
<dbReference type="SUPFAM" id="SSF54966">
    <property type="entry name" value="RuBisCO, large subunit, small (N-terminal) domain"/>
    <property type="match status" value="1"/>
</dbReference>
<dbReference type="PROSITE" id="PS00157">
    <property type="entry name" value="RUBISCO_LARGE"/>
    <property type="match status" value="1"/>
</dbReference>
<geneLocation type="chloroplast"/>
<organism>
    <name type="scientific">Hamamelis mollis</name>
    <name type="common">Chinese witch hazel</name>
    <dbReference type="NCBI Taxonomy" id="4396"/>
    <lineage>
        <taxon>Eukaryota</taxon>
        <taxon>Viridiplantae</taxon>
        <taxon>Streptophyta</taxon>
        <taxon>Embryophyta</taxon>
        <taxon>Tracheophyta</taxon>
        <taxon>Spermatophyta</taxon>
        <taxon>Magnoliopsida</taxon>
        <taxon>eudicotyledons</taxon>
        <taxon>Gunneridae</taxon>
        <taxon>Pentapetalae</taxon>
        <taxon>Saxifragales</taxon>
        <taxon>Hamamelidaceae</taxon>
        <taxon>Hamamelis</taxon>
    </lineage>
</organism>
<feature type="chain" id="PRO_0000062488" description="Ribulose bisphosphate carboxylase large chain">
    <location>
        <begin position="1" status="less than"/>
        <end position="465"/>
    </location>
</feature>
<feature type="active site" description="Proton acceptor" evidence="1">
    <location>
        <position position="165"/>
    </location>
</feature>
<feature type="active site" description="Proton acceptor" evidence="1">
    <location>
        <position position="284"/>
    </location>
</feature>
<feature type="binding site" description="in homodimeric partner" evidence="1">
    <location>
        <position position="113"/>
    </location>
    <ligand>
        <name>substrate</name>
    </ligand>
</feature>
<feature type="binding site" evidence="1">
    <location>
        <position position="163"/>
    </location>
    <ligand>
        <name>substrate</name>
    </ligand>
</feature>
<feature type="binding site" evidence="1">
    <location>
        <position position="167"/>
    </location>
    <ligand>
        <name>substrate</name>
    </ligand>
</feature>
<feature type="binding site" description="via carbamate group" evidence="1">
    <location>
        <position position="191"/>
    </location>
    <ligand>
        <name>Mg(2+)</name>
        <dbReference type="ChEBI" id="CHEBI:18420"/>
    </ligand>
</feature>
<feature type="binding site" evidence="1">
    <location>
        <position position="193"/>
    </location>
    <ligand>
        <name>Mg(2+)</name>
        <dbReference type="ChEBI" id="CHEBI:18420"/>
    </ligand>
</feature>
<feature type="binding site" evidence="1">
    <location>
        <position position="194"/>
    </location>
    <ligand>
        <name>Mg(2+)</name>
        <dbReference type="ChEBI" id="CHEBI:18420"/>
    </ligand>
</feature>
<feature type="binding site" evidence="1">
    <location>
        <position position="285"/>
    </location>
    <ligand>
        <name>substrate</name>
    </ligand>
</feature>
<feature type="binding site" evidence="1">
    <location>
        <position position="317"/>
    </location>
    <ligand>
        <name>substrate</name>
    </ligand>
</feature>
<feature type="binding site" evidence="1">
    <location>
        <position position="369"/>
    </location>
    <ligand>
        <name>substrate</name>
    </ligand>
</feature>
<feature type="site" description="Transition state stabilizer" evidence="1">
    <location>
        <position position="324"/>
    </location>
</feature>
<feature type="modified residue" description="N6,N6,N6-trimethyllysine" evidence="1">
    <location>
        <position position="4"/>
    </location>
</feature>
<feature type="modified residue" description="N6-carboxylysine" evidence="1">
    <location>
        <position position="191"/>
    </location>
</feature>
<feature type="disulfide bond" description="Interchain; in linked form" evidence="1">
    <location>
        <position position="237"/>
    </location>
</feature>
<feature type="non-terminal residue">
    <location>
        <position position="1"/>
    </location>
</feature>
<protein>
    <recommendedName>
        <fullName evidence="1">Ribulose bisphosphate carboxylase large chain</fullName>
        <shortName evidence="1">RuBisCO large subunit</shortName>
        <ecNumber evidence="1">4.1.1.39</ecNumber>
    </recommendedName>
</protein>
<reference key="1">
    <citation type="journal article" date="1992" name="Science">
        <title>Carnivorous plants: phylogeny and structural evolution.</title>
        <authorList>
            <person name="Albert V.A."/>
            <person name="Williams S.E."/>
            <person name="Chase M.W."/>
        </authorList>
    </citation>
    <scope>NUCLEOTIDE SEQUENCE [GENOMIC DNA]</scope>
</reference>
<evidence type="ECO:0000255" key="1">
    <source>
        <dbReference type="HAMAP-Rule" id="MF_01338"/>
    </source>
</evidence>
<accession>P28419</accession>
<comment type="function">
    <text evidence="1">RuBisCO catalyzes two reactions: the carboxylation of D-ribulose 1,5-bisphosphate, the primary event in carbon dioxide fixation, as well as the oxidative fragmentation of the pentose substrate in the photorespiration process. Both reactions occur simultaneously and in competition at the same active site.</text>
</comment>
<comment type="catalytic activity">
    <reaction evidence="1">
        <text>2 (2R)-3-phosphoglycerate + 2 H(+) = D-ribulose 1,5-bisphosphate + CO2 + H2O</text>
        <dbReference type="Rhea" id="RHEA:23124"/>
        <dbReference type="ChEBI" id="CHEBI:15377"/>
        <dbReference type="ChEBI" id="CHEBI:15378"/>
        <dbReference type="ChEBI" id="CHEBI:16526"/>
        <dbReference type="ChEBI" id="CHEBI:57870"/>
        <dbReference type="ChEBI" id="CHEBI:58272"/>
        <dbReference type="EC" id="4.1.1.39"/>
    </reaction>
</comment>
<comment type="catalytic activity">
    <reaction evidence="1">
        <text>D-ribulose 1,5-bisphosphate + O2 = 2-phosphoglycolate + (2R)-3-phosphoglycerate + 2 H(+)</text>
        <dbReference type="Rhea" id="RHEA:36631"/>
        <dbReference type="ChEBI" id="CHEBI:15378"/>
        <dbReference type="ChEBI" id="CHEBI:15379"/>
        <dbReference type="ChEBI" id="CHEBI:57870"/>
        <dbReference type="ChEBI" id="CHEBI:58033"/>
        <dbReference type="ChEBI" id="CHEBI:58272"/>
    </reaction>
</comment>
<comment type="cofactor">
    <cofactor evidence="1">
        <name>Mg(2+)</name>
        <dbReference type="ChEBI" id="CHEBI:18420"/>
    </cofactor>
    <text evidence="1">Binds 1 Mg(2+) ion per subunit.</text>
</comment>
<comment type="subunit">
    <text evidence="1">Heterohexadecamer of 8 large chains and 8 small chains; disulfide-linked. The disulfide link is formed within the large subunit homodimers.</text>
</comment>
<comment type="subcellular location">
    <subcellularLocation>
        <location>Plastid</location>
        <location>Chloroplast</location>
    </subcellularLocation>
</comment>
<comment type="PTM">
    <text evidence="1">The disulfide bond which can form in the large chain dimeric partners within the hexadecamer appears to be associated with oxidative stress and protein turnover.</text>
</comment>
<comment type="miscellaneous">
    <text evidence="1">The basic functional RuBisCO is composed of a large chain homodimer in a 'head-to-tail' conformation. In form I RuBisCO this homodimer is arranged in a barrel-like tetramer with the small subunits forming a tetrameric 'cap' on each end of the 'barrel'.</text>
</comment>
<comment type="similarity">
    <text evidence="1">Belongs to the RuBisCO large chain family. Type I subfamily.</text>
</comment>
<sequence>VGFKAGVKDYKLTYYTPEYETKDTDILAAFRVTPQPGVPPEEAGAAVAAESSTGTWTTVWTDGLTSLDRYKGRCYHIEPVAGEESQXIAYVAYPLDLFEEGSVTNMFTSIVGNVFGFKALRALRLEDLRIPPAYSKTFQGPPHGIQVERDKLNKYGRPLLGCTIKPKLGLSAKNYGRAVYECLRGGLDFTKDDENVNSQPFMRWRDRFLFCAEAIYKAQAETGEIKGHYLNATAGTCEEMIKRAVFARELGVPIVMHDYLTGGFTANTTLAHYCRDNGLLLHIHRAMHAVIDRQKNHGMHFRVLAKALRMSGGDHIHAGTVVGKLEGEREITLGFVDLLRDDFIEKDRSRGIYFTQDWVSLPGVLPVASGGIHVWHMPALTEIFGDDSVLQFGGGTLGHPWGNAPGAVANRVALEACVQARNEGRDLAREGNEIIREASKWSPELAAACEVWKEIKFEFEAMDTL</sequence>
<keyword id="KW-0113">Calvin cycle</keyword>
<keyword id="KW-0120">Carbon dioxide fixation</keyword>
<keyword id="KW-0150">Chloroplast</keyword>
<keyword id="KW-1015">Disulfide bond</keyword>
<keyword id="KW-0456">Lyase</keyword>
<keyword id="KW-0460">Magnesium</keyword>
<keyword id="KW-0479">Metal-binding</keyword>
<keyword id="KW-0488">Methylation</keyword>
<keyword id="KW-0503">Monooxygenase</keyword>
<keyword id="KW-0560">Oxidoreductase</keyword>
<keyword id="KW-0601">Photorespiration</keyword>
<keyword id="KW-0602">Photosynthesis</keyword>
<keyword id="KW-0934">Plastid</keyword>
<gene>
    <name evidence="1" type="primary">rbcL</name>
</gene>
<name>RBL_HAMMO</name>